<protein>
    <recommendedName>
        <fullName evidence="1">Dol-P-Man:Man(5)GlcNAc(2)-PP-Dol alpha-1,3-mannosyltransferase</fullName>
        <ecNumber evidence="1">2.4.1.258</ecNumber>
    </recommendedName>
    <alternativeName>
        <fullName>Asparagine-linked glycosylation protein 6</fullName>
    </alternativeName>
    <alternativeName>
        <fullName>Dol-P-Man-dependent alpha(1-3)-mannosyltransferase</fullName>
    </alternativeName>
    <alternativeName>
        <fullName>Dolichyl-P-Man:Man(5)GlcNAc(2)-PP-dolichyl mannosyltransferase</fullName>
    </alternativeName>
</protein>
<name>ALG3_CRYNJ</name>
<reference key="1">
    <citation type="journal article" date="2005" name="Science">
        <title>The genome of the basidiomycetous yeast and human pathogen Cryptococcus neoformans.</title>
        <authorList>
            <person name="Loftus B.J."/>
            <person name="Fung E."/>
            <person name="Roncaglia P."/>
            <person name="Rowley D."/>
            <person name="Amedeo P."/>
            <person name="Bruno D."/>
            <person name="Vamathevan J."/>
            <person name="Miranda M."/>
            <person name="Anderson I.J."/>
            <person name="Fraser J.A."/>
            <person name="Allen J.E."/>
            <person name="Bosdet I.E."/>
            <person name="Brent M.R."/>
            <person name="Chiu R."/>
            <person name="Doering T.L."/>
            <person name="Donlin M.J."/>
            <person name="D'Souza C.A."/>
            <person name="Fox D.S."/>
            <person name="Grinberg V."/>
            <person name="Fu J."/>
            <person name="Fukushima M."/>
            <person name="Haas B.J."/>
            <person name="Huang J.C."/>
            <person name="Janbon G."/>
            <person name="Jones S.J.M."/>
            <person name="Koo H.L."/>
            <person name="Krzywinski M.I."/>
            <person name="Kwon-Chung K.J."/>
            <person name="Lengeler K.B."/>
            <person name="Maiti R."/>
            <person name="Marra M.A."/>
            <person name="Marra R.E."/>
            <person name="Mathewson C.A."/>
            <person name="Mitchell T.G."/>
            <person name="Pertea M."/>
            <person name="Riggs F.R."/>
            <person name="Salzberg S.L."/>
            <person name="Schein J.E."/>
            <person name="Shvartsbeyn A."/>
            <person name="Shin H."/>
            <person name="Shumway M."/>
            <person name="Specht C.A."/>
            <person name="Suh B.B."/>
            <person name="Tenney A."/>
            <person name="Utterback T.R."/>
            <person name="Wickes B.L."/>
            <person name="Wortman J.R."/>
            <person name="Wye N.H."/>
            <person name="Kronstad J.W."/>
            <person name="Lodge J.K."/>
            <person name="Heitman J."/>
            <person name="Davis R.W."/>
            <person name="Fraser C.M."/>
            <person name="Hyman R.W."/>
        </authorList>
    </citation>
    <scope>NUCLEOTIDE SEQUENCE [LARGE SCALE GENOMIC DNA]</scope>
    <source>
        <strain>JEC21 / ATCC MYA-565</strain>
    </source>
</reference>
<gene>
    <name type="primary">ALG3</name>
    <name type="ordered locus">CNL04800</name>
</gene>
<proteinExistence type="inferred from homology"/>
<evidence type="ECO:0000250" key="1">
    <source>
        <dbReference type="UniProtKB" id="P38179"/>
    </source>
</evidence>
<evidence type="ECO:0000255" key="2"/>
<evidence type="ECO:0000305" key="3"/>
<comment type="function">
    <text evidence="1">Dol-P-Man:Man(5)GlcNAc(2)-PP-Dol alpha-1,3-mannosyltransferase that operates in the biosynthetic pathway of dolichol-linked oligosaccharides, the glycan precursors employed in protein asparagine (N)-glycosylation. The assembly of dolichol-linked oligosaccharides begins on the cytosolic side of the endoplasmic reticulum membrane and finishes in its lumen. The sequential addition of sugars to dolichol pyrophosphate produces dolichol-linked oligosaccharides containing fourteen sugars, including two GlcNAcs, nine mannoses and three glucoses. Once assembled, the oligosaccharide is transferred from the lipid to nascent proteins by oligosaccharyltransferases. In the lumen of the endoplasmic reticulum, adds the first dolichyl beta-D-mannosyl phosphate derived mannose in an alpha-1,3 linkage to Man(5)GlcNAc(2)-PP-dolichol to produce Man(6)GlcNAc(2)-PP-dolichol.</text>
</comment>
<comment type="catalytic activity">
    <reaction evidence="1">
        <text>an alpha-D-Man-(1-&gt;2)-alpha-D-Man-(1-&gt;2)-alpha-D-Man-(1-&gt;3)-[alpha-D-Man-(1-&gt;6)]-beta-D-Man-(1-&gt;4)-beta-D-GlcNAc-(1-&gt;4)-alpha-D-GlcNAc-diphospho-di-trans,poly-cis-dolichol + a di-trans,poly-cis-dolichyl beta-D-mannosyl phosphate = an alpha-D-Man-(1-&gt;2)-alpha-D-Man-(1-&gt;2)-alpha-D-Man-(1-&gt;3)-[alpha-D-Man-(1-&gt;3)-alpha-D-Man-(1-&gt;6)]-beta-D-Man-(1-&gt;4)-beta-D-GlcNAc-(1-&gt;4)-alpha-D-GlcNAc-diphospho-di-trans,poly-cis-dolichol + a di-trans,poly-cis-dolichyl phosphate + H(+)</text>
        <dbReference type="Rhea" id="RHEA:29527"/>
        <dbReference type="Rhea" id="RHEA-COMP:19498"/>
        <dbReference type="Rhea" id="RHEA-COMP:19501"/>
        <dbReference type="Rhea" id="RHEA-COMP:19516"/>
        <dbReference type="Rhea" id="RHEA-COMP:19517"/>
        <dbReference type="ChEBI" id="CHEBI:15378"/>
        <dbReference type="ChEBI" id="CHEBI:57683"/>
        <dbReference type="ChEBI" id="CHEBI:58211"/>
        <dbReference type="ChEBI" id="CHEBI:132515"/>
        <dbReference type="ChEBI" id="CHEBI:132516"/>
        <dbReference type="EC" id="2.4.1.258"/>
    </reaction>
    <physiologicalReaction direction="left-to-right" evidence="1">
        <dbReference type="Rhea" id="RHEA:29528"/>
    </physiologicalReaction>
</comment>
<comment type="pathway">
    <text evidence="1">Protein modification; protein glycosylation.</text>
</comment>
<comment type="subcellular location">
    <subcellularLocation>
        <location evidence="1">Endoplasmic reticulum membrane</location>
        <topology evidence="2">Multi-pass membrane protein</topology>
    </subcellularLocation>
</comment>
<comment type="similarity">
    <text evidence="3">Belongs to the glycosyltransferase ALG3 family.</text>
</comment>
<organism>
    <name type="scientific">Cryptococcus neoformans var. neoformans serotype D (strain JEC21 / ATCC MYA-565)</name>
    <name type="common">Filobasidiella neoformans</name>
    <dbReference type="NCBI Taxonomy" id="214684"/>
    <lineage>
        <taxon>Eukaryota</taxon>
        <taxon>Fungi</taxon>
        <taxon>Dikarya</taxon>
        <taxon>Basidiomycota</taxon>
        <taxon>Agaricomycotina</taxon>
        <taxon>Tremellomycetes</taxon>
        <taxon>Tremellales</taxon>
        <taxon>Cryptococcaceae</taxon>
        <taxon>Cryptococcus</taxon>
        <taxon>Cryptococcus neoformans species complex</taxon>
    </lineage>
</organism>
<feature type="chain" id="PRO_0000350925" description="Dol-P-Man:Man(5)GlcNAc(2)-PP-Dol alpha-1,3-mannosyltransferase">
    <location>
        <begin position="1"/>
        <end position="447"/>
    </location>
</feature>
<feature type="topological domain" description="Lumenal" evidence="2">
    <location>
        <begin position="1"/>
        <end position="34"/>
    </location>
</feature>
<feature type="transmembrane region" description="Helical" evidence="2">
    <location>
        <begin position="35"/>
        <end position="55"/>
    </location>
</feature>
<feature type="topological domain" description="Cytoplasmic" evidence="2">
    <location>
        <begin position="56"/>
        <end position="83"/>
    </location>
</feature>
<feature type="transmembrane region" description="Helical" evidence="2">
    <location>
        <begin position="84"/>
        <end position="104"/>
    </location>
</feature>
<feature type="topological domain" description="Lumenal" evidence="2">
    <location>
        <begin position="105"/>
        <end position="118"/>
    </location>
</feature>
<feature type="transmembrane region" description="Helical" evidence="2">
    <location>
        <begin position="119"/>
        <end position="139"/>
    </location>
</feature>
<feature type="topological domain" description="Cytoplasmic" evidence="2">
    <location>
        <begin position="140"/>
        <end position="170"/>
    </location>
</feature>
<feature type="transmembrane region" description="Helical" evidence="2">
    <location>
        <begin position="171"/>
        <end position="191"/>
    </location>
</feature>
<feature type="topological domain" description="Lumenal" evidence="2">
    <location>
        <begin position="192"/>
        <end position="204"/>
    </location>
</feature>
<feature type="transmembrane region" description="Helical" evidence="2">
    <location>
        <begin position="205"/>
        <end position="225"/>
    </location>
</feature>
<feature type="topological domain" description="Cytoplasmic" evidence="2">
    <location>
        <begin position="226"/>
        <end position="232"/>
    </location>
</feature>
<feature type="transmembrane region" description="Helical" evidence="2">
    <location>
        <begin position="233"/>
        <end position="253"/>
    </location>
</feature>
<feature type="topological domain" description="Lumenal" evidence="2">
    <location>
        <begin position="254"/>
        <end position="296"/>
    </location>
</feature>
<feature type="transmembrane region" description="Helical" evidence="2">
    <location>
        <begin position="297"/>
        <end position="317"/>
    </location>
</feature>
<feature type="topological domain" description="Cytoplasmic" evidence="2">
    <location>
        <begin position="318"/>
        <end position="343"/>
    </location>
</feature>
<feature type="transmembrane region" description="Helical" evidence="2">
    <location>
        <begin position="344"/>
        <end position="364"/>
    </location>
</feature>
<feature type="topological domain" description="Lumenal" evidence="2">
    <location>
        <begin position="365"/>
        <end position="379"/>
    </location>
</feature>
<feature type="transmembrane region" description="Helical" evidence="2">
    <location>
        <begin position="380"/>
        <end position="400"/>
    </location>
</feature>
<feature type="topological domain" description="Cytoplasmic" evidence="2">
    <location>
        <begin position="401"/>
        <end position="411"/>
    </location>
</feature>
<feature type="transmembrane region" description="Helical" evidence="2">
    <location>
        <begin position="412"/>
        <end position="432"/>
    </location>
</feature>
<feature type="topological domain" description="Lumenal" evidence="2">
    <location>
        <begin position="433"/>
        <end position="447"/>
    </location>
</feature>
<accession>P0CN92</accession>
<accession>Q55M08</accession>
<accession>Q5K8R1</accession>
<sequence>MSRQSLFTPALGQRKGLISHTVDLVRALLFDRRYFWHTAFLLFLGEVALSLLVIWKIPYTKIDWPAYMQQVDMFLAGERDYSKIEGETGPLVYPALHLYIYTAFHRLLPSIENVRPAQFVFLGFYLATYLAISTIYYLAGRPSNGGHHFPQVLLIPLTLSKRAHSIFLLRLFNDPIAMLIFYLSVIAFQIGGRKGWRLGCVLFSLALGVKMNILNFLPGLLVLLFQYRGIVGTVEGLSIIGLIQFLLPAPFFFSKSNPYLIRAYFTSAFDFSRQFLYEWTVNWRFISEETFLSRERAVTLLAGHLTVLGLFAAFKWSPVPGGTLRVLRKGFSDPLNQALEVSQVPAYHIPLVLFSANLIGMLFARSLHYQFHSWYFHQLPFLLYSGAGWGNMLTSVLIWVTVQYAWETAPSTISTSAALLAGHGAMVFGLFFHGMKRPSSSQKSKAK</sequence>
<keyword id="KW-0256">Endoplasmic reticulum</keyword>
<keyword id="KW-0328">Glycosyltransferase</keyword>
<keyword id="KW-0472">Membrane</keyword>
<keyword id="KW-1185">Reference proteome</keyword>
<keyword id="KW-0808">Transferase</keyword>
<keyword id="KW-0812">Transmembrane</keyword>
<keyword id="KW-1133">Transmembrane helix</keyword>
<dbReference type="EC" id="2.4.1.258" evidence="1"/>
<dbReference type="EMBL" id="AE017352">
    <property type="protein sequence ID" value="AAW46504.1"/>
    <property type="molecule type" value="Genomic_DNA"/>
</dbReference>
<dbReference type="RefSeq" id="XP_568021.1">
    <property type="nucleotide sequence ID" value="XM_568021.1"/>
</dbReference>
<dbReference type="FunCoup" id="P0CN92">
    <property type="interactions" value="430"/>
</dbReference>
<dbReference type="STRING" id="214684.P0CN92"/>
<dbReference type="CAZy" id="GT58">
    <property type="family name" value="Glycosyltransferase Family 58"/>
</dbReference>
<dbReference type="PaxDb" id="214684-P0CN92"/>
<dbReference type="EnsemblFungi" id="AAW46504">
    <property type="protein sequence ID" value="AAW46504"/>
    <property type="gene ID" value="CNL04800"/>
</dbReference>
<dbReference type="GeneID" id="3254774"/>
<dbReference type="KEGG" id="cne:CNL04800"/>
<dbReference type="VEuPathDB" id="FungiDB:CNL04800"/>
<dbReference type="eggNOG" id="KOG2762">
    <property type="taxonomic scope" value="Eukaryota"/>
</dbReference>
<dbReference type="HOGENOM" id="CLU_035382_3_0_1"/>
<dbReference type="InParanoid" id="P0CN92"/>
<dbReference type="OMA" id="DWETYMI"/>
<dbReference type="OrthoDB" id="20028at2759"/>
<dbReference type="UniPathway" id="UPA00378"/>
<dbReference type="Proteomes" id="UP000002149">
    <property type="component" value="Chromosome 12"/>
</dbReference>
<dbReference type="GO" id="GO:0005783">
    <property type="term" value="C:endoplasmic reticulum"/>
    <property type="evidence" value="ECO:0000318"/>
    <property type="project" value="GO_Central"/>
</dbReference>
<dbReference type="GO" id="GO:0005789">
    <property type="term" value="C:endoplasmic reticulum membrane"/>
    <property type="evidence" value="ECO:0007669"/>
    <property type="project" value="UniProtKB-SubCell"/>
</dbReference>
<dbReference type="GO" id="GO:0052925">
    <property type="term" value="F:dol-P-Man:Man(5)GlcNAc(2)-PP-Dol alpha-1,3-mannosyltransferase activity"/>
    <property type="evidence" value="ECO:0000318"/>
    <property type="project" value="GO_Central"/>
</dbReference>
<dbReference type="GO" id="GO:0006486">
    <property type="term" value="P:protein glycosylation"/>
    <property type="evidence" value="ECO:0000318"/>
    <property type="project" value="GO_Central"/>
</dbReference>
<dbReference type="InterPro" id="IPR007873">
    <property type="entry name" value="Glycosyltransferase_ALG3"/>
</dbReference>
<dbReference type="PANTHER" id="PTHR12646:SF0">
    <property type="entry name" value="DOL-P-MAN:MAN(5)GLCNAC(2)-PP-DOL ALPHA-1,3-MANNOSYLTRANSFERASE"/>
    <property type="match status" value="1"/>
</dbReference>
<dbReference type="PANTHER" id="PTHR12646">
    <property type="entry name" value="NOT56 - RELATED"/>
    <property type="match status" value="1"/>
</dbReference>
<dbReference type="Pfam" id="PF05208">
    <property type="entry name" value="ALG3"/>
    <property type="match status" value="1"/>
</dbReference>